<name>MTLD_AJECN</name>
<comment type="function">
    <text evidence="1">Catalyzes the NAD(H)-dependent interconversion of D-fructose 6-phosphate and D-mannitol 1-phosphate in the mannitol metabolic pathway.</text>
</comment>
<comment type="catalytic activity">
    <reaction>
        <text>D-mannitol 1-phosphate + NAD(+) = beta-D-fructose 6-phosphate + NADH + H(+)</text>
        <dbReference type="Rhea" id="RHEA:19661"/>
        <dbReference type="ChEBI" id="CHEBI:15378"/>
        <dbReference type="ChEBI" id="CHEBI:57540"/>
        <dbReference type="ChEBI" id="CHEBI:57634"/>
        <dbReference type="ChEBI" id="CHEBI:57945"/>
        <dbReference type="ChEBI" id="CHEBI:61381"/>
        <dbReference type="EC" id="1.1.1.17"/>
    </reaction>
</comment>
<comment type="subunit">
    <text evidence="1">Monomer.</text>
</comment>
<comment type="similarity">
    <text evidence="2">Belongs to the mannitol dehydrogenase family.</text>
</comment>
<comment type="sequence caution" evidence="2">
    <conflict type="erroneous initiation">
        <sequence resource="EMBL-CDS" id="EDN05065"/>
    </conflict>
</comment>
<reference key="1">
    <citation type="journal article" date="2009" name="Genome Res.">
        <title>Comparative genomic analyses of the human fungal pathogens Coccidioides and their relatives.</title>
        <authorList>
            <person name="Sharpton T.J."/>
            <person name="Stajich J.E."/>
            <person name="Rounsley S.D."/>
            <person name="Gardner M.J."/>
            <person name="Wortman J.R."/>
            <person name="Jordar V.S."/>
            <person name="Maiti R."/>
            <person name="Kodira C.D."/>
            <person name="Neafsey D.E."/>
            <person name="Zeng Q."/>
            <person name="Hung C.-Y."/>
            <person name="McMahan C."/>
            <person name="Muszewska A."/>
            <person name="Grynberg M."/>
            <person name="Mandel M.A."/>
            <person name="Kellner E.M."/>
            <person name="Barker B.M."/>
            <person name="Galgiani J.N."/>
            <person name="Orbach M.J."/>
            <person name="Kirkland T.N."/>
            <person name="Cole G.T."/>
            <person name="Henn M.R."/>
            <person name="Birren B.W."/>
            <person name="Taylor J.W."/>
        </authorList>
    </citation>
    <scope>NUCLEOTIDE SEQUENCE [LARGE SCALE GENOMIC DNA]</scope>
    <source>
        <strain>NAm1 / WU24</strain>
    </source>
</reference>
<accession>A6RGF3</accession>
<evidence type="ECO:0000250" key="1"/>
<evidence type="ECO:0000305" key="2"/>
<dbReference type="EC" id="1.1.1.17"/>
<dbReference type="EMBL" id="CH476666">
    <property type="protein sequence ID" value="EDN05065.1"/>
    <property type="status" value="ALT_INIT"/>
    <property type="molecule type" value="Genomic_DNA"/>
</dbReference>
<dbReference type="SMR" id="A6RGF3"/>
<dbReference type="STRING" id="339724.A6RGF3"/>
<dbReference type="KEGG" id="aje:HCAG_08720"/>
<dbReference type="HOGENOM" id="CLU_036089_0_1_1"/>
<dbReference type="OrthoDB" id="2822at299071"/>
<dbReference type="Proteomes" id="UP000009297">
    <property type="component" value="Unassembled WGS sequence"/>
</dbReference>
<dbReference type="GO" id="GO:0005829">
    <property type="term" value="C:cytosol"/>
    <property type="evidence" value="ECO:0007669"/>
    <property type="project" value="TreeGrafter"/>
</dbReference>
<dbReference type="GO" id="GO:0008926">
    <property type="term" value="F:mannitol-1-phosphate 5-dehydrogenase activity"/>
    <property type="evidence" value="ECO:0007669"/>
    <property type="project" value="UniProtKB-EC"/>
</dbReference>
<dbReference type="GO" id="GO:0019592">
    <property type="term" value="P:mannitol catabolic process"/>
    <property type="evidence" value="ECO:0007669"/>
    <property type="project" value="TreeGrafter"/>
</dbReference>
<dbReference type="FunFam" id="3.40.50.720:FF:000316">
    <property type="entry name" value="Mannitol-1-phosphate 5-dehydrogenase"/>
    <property type="match status" value="1"/>
</dbReference>
<dbReference type="Gene3D" id="1.10.1040.10">
    <property type="entry name" value="N-(1-d-carboxylethyl)-l-norvaline Dehydrogenase, domain 2"/>
    <property type="match status" value="1"/>
</dbReference>
<dbReference type="Gene3D" id="3.40.50.720">
    <property type="entry name" value="NAD(P)-binding Rossmann-like Domain"/>
    <property type="match status" value="1"/>
</dbReference>
<dbReference type="HAMAP" id="MF_00196">
    <property type="entry name" value="Mannitol_dehydrog"/>
    <property type="match status" value="1"/>
</dbReference>
<dbReference type="InterPro" id="IPR008927">
    <property type="entry name" value="6-PGluconate_DH-like_C_sf"/>
</dbReference>
<dbReference type="InterPro" id="IPR013328">
    <property type="entry name" value="6PGD_dom2"/>
</dbReference>
<dbReference type="InterPro" id="IPR023028">
    <property type="entry name" value="Mannitol_1_phos_5_DH"/>
</dbReference>
<dbReference type="InterPro" id="IPR000669">
    <property type="entry name" value="Mannitol_DH"/>
</dbReference>
<dbReference type="InterPro" id="IPR013118">
    <property type="entry name" value="Mannitol_DH_C"/>
</dbReference>
<dbReference type="InterPro" id="IPR013131">
    <property type="entry name" value="Mannitol_DH_N"/>
</dbReference>
<dbReference type="InterPro" id="IPR036291">
    <property type="entry name" value="NAD(P)-bd_dom_sf"/>
</dbReference>
<dbReference type="NCBIfam" id="NF002647">
    <property type="entry name" value="PRK02318.1-3"/>
    <property type="match status" value="1"/>
</dbReference>
<dbReference type="NCBIfam" id="NF002652">
    <property type="entry name" value="PRK02318.2-5"/>
    <property type="match status" value="1"/>
</dbReference>
<dbReference type="PANTHER" id="PTHR30524:SF0">
    <property type="entry name" value="ALTRONATE OXIDOREDUCTASE-RELATED"/>
    <property type="match status" value="1"/>
</dbReference>
<dbReference type="PANTHER" id="PTHR30524">
    <property type="entry name" value="MANNITOL-1-PHOSPHATE 5-DEHYDROGENASE"/>
    <property type="match status" value="1"/>
</dbReference>
<dbReference type="Pfam" id="PF01232">
    <property type="entry name" value="Mannitol_dh"/>
    <property type="match status" value="1"/>
</dbReference>
<dbReference type="Pfam" id="PF08125">
    <property type="entry name" value="Mannitol_dh_C"/>
    <property type="match status" value="1"/>
</dbReference>
<dbReference type="PRINTS" id="PR00084">
    <property type="entry name" value="MTLDHDRGNASE"/>
</dbReference>
<dbReference type="SUPFAM" id="SSF48179">
    <property type="entry name" value="6-phosphogluconate dehydrogenase C-terminal domain-like"/>
    <property type="match status" value="1"/>
</dbReference>
<dbReference type="SUPFAM" id="SSF51735">
    <property type="entry name" value="NAD(P)-binding Rossmann-fold domains"/>
    <property type="match status" value="1"/>
</dbReference>
<proteinExistence type="inferred from homology"/>
<feature type="chain" id="PRO_0000371516" description="Mannitol-1-phosphate 5-dehydrogenase">
    <location>
        <begin position="1"/>
        <end position="388"/>
    </location>
</feature>
<feature type="active site" evidence="1">
    <location>
        <position position="213"/>
    </location>
</feature>
<feature type="binding site" evidence="1">
    <location>
        <begin position="5"/>
        <end position="16"/>
    </location>
    <ligand>
        <name>NAD(+)</name>
        <dbReference type="ChEBI" id="CHEBI:57540"/>
    </ligand>
</feature>
<organism>
    <name type="scientific">Ajellomyces capsulatus (strain NAm1 / WU24)</name>
    <name type="common">Darling's disease fungus</name>
    <name type="synonym">Histoplasma capsulatum</name>
    <dbReference type="NCBI Taxonomy" id="2059318"/>
    <lineage>
        <taxon>Eukaryota</taxon>
        <taxon>Fungi</taxon>
        <taxon>Dikarya</taxon>
        <taxon>Ascomycota</taxon>
        <taxon>Pezizomycotina</taxon>
        <taxon>Eurotiomycetes</taxon>
        <taxon>Eurotiomycetidae</taxon>
        <taxon>Onygenales</taxon>
        <taxon>Ajellomycetaceae</taxon>
        <taxon>Histoplasma</taxon>
    </lineage>
</organism>
<sequence length="388" mass="43148">MGKKAVHFGGGNIGRGFVGEFLHESGYEVVFVDVMDNVIDALNKHSSYTVTEISEEGEQQKVITNYRAINSKHNLDDVIKEISTADVVTCAVGPNILKFIAPPIAKGIDTRTLSKPLAVIACENAIGATDTLHGFIKENTDEARLPSLYSRAQFANSAIDRIVPTQDLGSGLNVKIEKFYEWVVEKTPFGDVGHPDIKDIHWVDNLEPYIERKLFTVNTGHATAAYYGYSAGKKTIHDALRDDRIRKEVNAALAETSRLIVEKHGISPEEQARYVSSIITRISNPHLEDIVQRVGRAPLRKLSRKERFIGPASQLAERGHTVTALMDAVEQALKFQNVPDDEESFELFKILKENSAADATTKLTGLEKEHPLYSRVLEKVDKVQKETK</sequence>
<protein>
    <recommendedName>
        <fullName>Mannitol-1-phosphate 5-dehydrogenase</fullName>
        <shortName>M1PDH</shortName>
        <shortName>MPD</shortName>
        <shortName>MPDH</shortName>
        <ecNumber>1.1.1.17</ecNumber>
    </recommendedName>
</protein>
<gene>
    <name type="ORF">HCAG_08720</name>
</gene>
<keyword id="KW-0520">NAD</keyword>
<keyword id="KW-0560">Oxidoreductase</keyword>
<keyword id="KW-1185">Reference proteome</keyword>